<comment type="function">
    <text evidence="1">Binds the lower part of the 30S subunit head. Binds mRNA in the 70S ribosome, positioning it for translation.</text>
</comment>
<comment type="subunit">
    <text evidence="1">Part of the 30S ribosomal subunit. Forms a tight complex with proteins S10 and S14.</text>
</comment>
<comment type="similarity">
    <text evidence="1">Belongs to the universal ribosomal protein uS3 family.</text>
</comment>
<gene>
    <name evidence="1" type="primary">rpsC</name>
    <name type="ordered locus">MUL_0796</name>
</gene>
<protein>
    <recommendedName>
        <fullName evidence="1">Small ribosomal subunit protein uS3</fullName>
    </recommendedName>
    <alternativeName>
        <fullName evidence="3">30S ribosomal protein S3</fullName>
    </alternativeName>
</protein>
<accession>A0PM69</accession>
<organism>
    <name type="scientific">Mycobacterium ulcerans (strain Agy99)</name>
    <dbReference type="NCBI Taxonomy" id="362242"/>
    <lineage>
        <taxon>Bacteria</taxon>
        <taxon>Bacillati</taxon>
        <taxon>Actinomycetota</taxon>
        <taxon>Actinomycetes</taxon>
        <taxon>Mycobacteriales</taxon>
        <taxon>Mycobacteriaceae</taxon>
        <taxon>Mycobacterium</taxon>
        <taxon>Mycobacterium ulcerans group</taxon>
    </lineage>
</organism>
<sequence>MGQKINPHGFRLGITTDWKSRWYADKQYADYVKEDVAIRRLLSSGLERAGIADVEIERTRDRVRVDIHTARPGIVIGRRGTEADRIRADLEKLTGKQVQLNILEVKNPESQAQLVAQGVAEQLSNRVAFRRAMRKAIQSAMRQPNVKGIRVQCSGRLGGAEMSRSEFYREGRVPLHTLRADIDYGLYEAKTTFGRIGVKVWIYKGDIVGGKRELAAAVPAGADRPRRERPAGSRPRRSGASGTTATGTEAGRAVGSEEPAAAESATTPEAQSTES</sequence>
<name>RS3_MYCUA</name>
<reference key="1">
    <citation type="journal article" date="2007" name="Genome Res.">
        <title>Reductive evolution and niche adaptation inferred from the genome of Mycobacterium ulcerans, the causative agent of Buruli ulcer.</title>
        <authorList>
            <person name="Stinear T.P."/>
            <person name="Seemann T."/>
            <person name="Pidot S."/>
            <person name="Frigui W."/>
            <person name="Reysset G."/>
            <person name="Garnier T."/>
            <person name="Meurice G."/>
            <person name="Simon D."/>
            <person name="Bouchier C."/>
            <person name="Ma L."/>
            <person name="Tichit M."/>
            <person name="Porter J.L."/>
            <person name="Ryan J."/>
            <person name="Johnson P.D.R."/>
            <person name="Davies J.K."/>
            <person name="Jenkin G.A."/>
            <person name="Small P.L.C."/>
            <person name="Jones L.M."/>
            <person name="Tekaia F."/>
            <person name="Laval F."/>
            <person name="Daffe M."/>
            <person name="Parkhill J."/>
            <person name="Cole S.T."/>
        </authorList>
    </citation>
    <scope>NUCLEOTIDE SEQUENCE [LARGE SCALE GENOMIC DNA]</scope>
    <source>
        <strain>Agy99</strain>
    </source>
</reference>
<keyword id="KW-0687">Ribonucleoprotein</keyword>
<keyword id="KW-0689">Ribosomal protein</keyword>
<keyword id="KW-0694">RNA-binding</keyword>
<keyword id="KW-0699">rRNA-binding</keyword>
<evidence type="ECO:0000255" key="1">
    <source>
        <dbReference type="HAMAP-Rule" id="MF_01309"/>
    </source>
</evidence>
<evidence type="ECO:0000256" key="2">
    <source>
        <dbReference type="SAM" id="MobiDB-lite"/>
    </source>
</evidence>
<evidence type="ECO:0000305" key="3"/>
<feature type="chain" id="PRO_0000293833" description="Small ribosomal subunit protein uS3">
    <location>
        <begin position="1"/>
        <end position="275"/>
    </location>
</feature>
<feature type="domain" description="KH type-2" evidence="1">
    <location>
        <begin position="38"/>
        <end position="106"/>
    </location>
</feature>
<feature type="region of interest" description="Disordered" evidence="2">
    <location>
        <begin position="217"/>
        <end position="275"/>
    </location>
</feature>
<feature type="compositionally biased region" description="Low complexity" evidence="2">
    <location>
        <begin position="238"/>
        <end position="275"/>
    </location>
</feature>
<proteinExistence type="inferred from homology"/>
<dbReference type="EMBL" id="CP000325">
    <property type="protein sequence ID" value="ABL03438.1"/>
    <property type="molecule type" value="Genomic_DNA"/>
</dbReference>
<dbReference type="RefSeq" id="WP_011739063.1">
    <property type="nucleotide sequence ID" value="NC_008611.1"/>
</dbReference>
<dbReference type="SMR" id="A0PM69"/>
<dbReference type="GeneID" id="34339762"/>
<dbReference type="KEGG" id="mul:MUL_0796"/>
<dbReference type="eggNOG" id="COG0092">
    <property type="taxonomic scope" value="Bacteria"/>
</dbReference>
<dbReference type="HOGENOM" id="CLU_058591_0_0_11"/>
<dbReference type="Proteomes" id="UP000000765">
    <property type="component" value="Chromosome"/>
</dbReference>
<dbReference type="GO" id="GO:0022627">
    <property type="term" value="C:cytosolic small ribosomal subunit"/>
    <property type="evidence" value="ECO:0007669"/>
    <property type="project" value="TreeGrafter"/>
</dbReference>
<dbReference type="GO" id="GO:0003729">
    <property type="term" value="F:mRNA binding"/>
    <property type="evidence" value="ECO:0007669"/>
    <property type="project" value="UniProtKB-UniRule"/>
</dbReference>
<dbReference type="GO" id="GO:0019843">
    <property type="term" value="F:rRNA binding"/>
    <property type="evidence" value="ECO:0007669"/>
    <property type="project" value="UniProtKB-UniRule"/>
</dbReference>
<dbReference type="GO" id="GO:0003735">
    <property type="term" value="F:structural constituent of ribosome"/>
    <property type="evidence" value="ECO:0007669"/>
    <property type="project" value="InterPro"/>
</dbReference>
<dbReference type="GO" id="GO:0006412">
    <property type="term" value="P:translation"/>
    <property type="evidence" value="ECO:0007669"/>
    <property type="project" value="UniProtKB-UniRule"/>
</dbReference>
<dbReference type="CDD" id="cd02412">
    <property type="entry name" value="KH-II_30S_S3"/>
    <property type="match status" value="1"/>
</dbReference>
<dbReference type="FunFam" id="3.30.1140.32:FF:000002">
    <property type="entry name" value="30S ribosomal protein S3"/>
    <property type="match status" value="1"/>
</dbReference>
<dbReference type="FunFam" id="3.30.300.20:FF:000001">
    <property type="entry name" value="30S ribosomal protein S3"/>
    <property type="match status" value="1"/>
</dbReference>
<dbReference type="Gene3D" id="3.30.300.20">
    <property type="match status" value="1"/>
</dbReference>
<dbReference type="Gene3D" id="3.30.1140.32">
    <property type="entry name" value="Ribosomal protein S3, C-terminal domain"/>
    <property type="match status" value="1"/>
</dbReference>
<dbReference type="HAMAP" id="MF_01309_B">
    <property type="entry name" value="Ribosomal_uS3_B"/>
    <property type="match status" value="1"/>
</dbReference>
<dbReference type="InterPro" id="IPR004087">
    <property type="entry name" value="KH_dom"/>
</dbReference>
<dbReference type="InterPro" id="IPR015946">
    <property type="entry name" value="KH_dom-like_a/b"/>
</dbReference>
<dbReference type="InterPro" id="IPR004044">
    <property type="entry name" value="KH_dom_type_2"/>
</dbReference>
<dbReference type="InterPro" id="IPR009019">
    <property type="entry name" value="KH_sf_prok-type"/>
</dbReference>
<dbReference type="InterPro" id="IPR036419">
    <property type="entry name" value="Ribosomal_S3_C_sf"/>
</dbReference>
<dbReference type="InterPro" id="IPR005704">
    <property type="entry name" value="Ribosomal_uS3_bac-typ"/>
</dbReference>
<dbReference type="InterPro" id="IPR001351">
    <property type="entry name" value="Ribosomal_uS3_C"/>
</dbReference>
<dbReference type="InterPro" id="IPR018280">
    <property type="entry name" value="Ribosomal_uS3_CS"/>
</dbReference>
<dbReference type="NCBIfam" id="TIGR01009">
    <property type="entry name" value="rpsC_bact"/>
    <property type="match status" value="1"/>
</dbReference>
<dbReference type="PANTHER" id="PTHR11760">
    <property type="entry name" value="30S/40S RIBOSOMAL PROTEIN S3"/>
    <property type="match status" value="1"/>
</dbReference>
<dbReference type="PANTHER" id="PTHR11760:SF19">
    <property type="entry name" value="SMALL RIBOSOMAL SUBUNIT PROTEIN US3C"/>
    <property type="match status" value="1"/>
</dbReference>
<dbReference type="Pfam" id="PF07650">
    <property type="entry name" value="KH_2"/>
    <property type="match status" value="1"/>
</dbReference>
<dbReference type="Pfam" id="PF00189">
    <property type="entry name" value="Ribosomal_S3_C"/>
    <property type="match status" value="1"/>
</dbReference>
<dbReference type="SMART" id="SM00322">
    <property type="entry name" value="KH"/>
    <property type="match status" value="1"/>
</dbReference>
<dbReference type="SUPFAM" id="SSF54814">
    <property type="entry name" value="Prokaryotic type KH domain (KH-domain type II)"/>
    <property type="match status" value="1"/>
</dbReference>
<dbReference type="SUPFAM" id="SSF54821">
    <property type="entry name" value="Ribosomal protein S3 C-terminal domain"/>
    <property type="match status" value="1"/>
</dbReference>
<dbReference type="PROSITE" id="PS50823">
    <property type="entry name" value="KH_TYPE_2"/>
    <property type="match status" value="1"/>
</dbReference>
<dbReference type="PROSITE" id="PS00548">
    <property type="entry name" value="RIBOSOMAL_S3"/>
    <property type="match status" value="1"/>
</dbReference>